<feature type="chain" id="PRO_0000337495" description="Elongation factor Tu">
    <location>
        <begin position="1"/>
        <end position="396"/>
    </location>
</feature>
<feature type="domain" description="tr-type G">
    <location>
        <begin position="10"/>
        <end position="206"/>
    </location>
</feature>
<feature type="region of interest" description="G1" evidence="1">
    <location>
        <begin position="19"/>
        <end position="26"/>
    </location>
</feature>
<feature type="region of interest" description="G2" evidence="1">
    <location>
        <begin position="60"/>
        <end position="64"/>
    </location>
</feature>
<feature type="region of interest" description="G3" evidence="1">
    <location>
        <begin position="81"/>
        <end position="84"/>
    </location>
</feature>
<feature type="region of interest" description="G4" evidence="1">
    <location>
        <begin position="136"/>
        <end position="139"/>
    </location>
</feature>
<feature type="region of interest" description="G5" evidence="1">
    <location>
        <begin position="174"/>
        <end position="176"/>
    </location>
</feature>
<feature type="binding site" evidence="2">
    <location>
        <begin position="19"/>
        <end position="26"/>
    </location>
    <ligand>
        <name>GTP</name>
        <dbReference type="ChEBI" id="CHEBI:37565"/>
    </ligand>
</feature>
<feature type="binding site" evidence="2">
    <location>
        <position position="26"/>
    </location>
    <ligand>
        <name>Mg(2+)</name>
        <dbReference type="ChEBI" id="CHEBI:18420"/>
    </ligand>
</feature>
<feature type="binding site" evidence="2">
    <location>
        <begin position="81"/>
        <end position="85"/>
    </location>
    <ligand>
        <name>GTP</name>
        <dbReference type="ChEBI" id="CHEBI:37565"/>
    </ligand>
</feature>
<feature type="binding site" evidence="2">
    <location>
        <begin position="136"/>
        <end position="139"/>
    </location>
    <ligand>
        <name>GTP</name>
        <dbReference type="ChEBI" id="CHEBI:37565"/>
    </ligand>
</feature>
<organism>
    <name type="scientific">Rhodopseudomonas palustris (strain BisA53)</name>
    <dbReference type="NCBI Taxonomy" id="316055"/>
    <lineage>
        <taxon>Bacteria</taxon>
        <taxon>Pseudomonadati</taxon>
        <taxon>Pseudomonadota</taxon>
        <taxon>Alphaproteobacteria</taxon>
        <taxon>Hyphomicrobiales</taxon>
        <taxon>Nitrobacteraceae</taxon>
        <taxon>Rhodopseudomonas</taxon>
    </lineage>
</organism>
<comment type="function">
    <text evidence="2">GTP hydrolase that promotes the GTP-dependent binding of aminoacyl-tRNA to the A-site of ribosomes during protein biosynthesis.</text>
</comment>
<comment type="catalytic activity">
    <reaction evidence="2">
        <text>GTP + H2O = GDP + phosphate + H(+)</text>
        <dbReference type="Rhea" id="RHEA:19669"/>
        <dbReference type="ChEBI" id="CHEBI:15377"/>
        <dbReference type="ChEBI" id="CHEBI:15378"/>
        <dbReference type="ChEBI" id="CHEBI:37565"/>
        <dbReference type="ChEBI" id="CHEBI:43474"/>
        <dbReference type="ChEBI" id="CHEBI:58189"/>
        <dbReference type="EC" id="3.6.5.3"/>
    </reaction>
    <physiologicalReaction direction="left-to-right" evidence="2">
        <dbReference type="Rhea" id="RHEA:19670"/>
    </physiologicalReaction>
</comment>
<comment type="subunit">
    <text evidence="2">Monomer.</text>
</comment>
<comment type="subcellular location">
    <subcellularLocation>
        <location evidence="2">Cytoplasm</location>
    </subcellularLocation>
</comment>
<comment type="similarity">
    <text evidence="2">Belongs to the TRAFAC class translation factor GTPase superfamily. Classic translation factor GTPase family. EF-Tu/EF-1A subfamily.</text>
</comment>
<sequence>MAKAKFERNKPHCNIGTIGHVDHGKTSLTAAITKVLAETGGATFTAYDQIDKAPEEKARGITISTAHVEYETANRHYAHVDCPGHADYVKNMITGAAQMDGGILVVSAADGPMPQTREHILLARQVGVPALVVFLNKCDMVDDPELLELVEMEVRELLSKYDFPGDDIPIIKGSALAALENKDPKLGHDAILELMKAVDSYIPQPERPIDQPFLMPVEDVFSISGRGTVVTGRVERGIIKVGEEIEIVGLRDTVKTTCTGVEMFRKLLDQGQAGDNIGALLRGTKREEVERGQVLCKPGSVKPHTKFKAEAYILTKEEGGRHTPFFTNYRPQFYFRTTDVTGVVHLPEGTEMVMPGDNIAMEVHLIVPIAMEEKLRFAIREGGRTVGAGVVASIIE</sequence>
<name>EFTU_RHOP5</name>
<dbReference type="EC" id="3.6.5.3" evidence="2"/>
<dbReference type="EMBL" id="CP000463">
    <property type="protein sequence ID" value="ABJ07518.1"/>
    <property type="molecule type" value="Genomic_DNA"/>
</dbReference>
<dbReference type="EMBL" id="CP000463">
    <property type="protein sequence ID" value="ABJ07542.1"/>
    <property type="molecule type" value="Genomic_DNA"/>
</dbReference>
<dbReference type="SMR" id="Q07KJ2"/>
<dbReference type="STRING" id="316055.RPE_3588"/>
<dbReference type="KEGG" id="rpe:RPE_3588"/>
<dbReference type="KEGG" id="rpe:RPE_3612"/>
<dbReference type="eggNOG" id="COG0050">
    <property type="taxonomic scope" value="Bacteria"/>
</dbReference>
<dbReference type="HOGENOM" id="CLU_007265_0_1_5"/>
<dbReference type="OrthoDB" id="9803139at2"/>
<dbReference type="GO" id="GO:0005829">
    <property type="term" value="C:cytosol"/>
    <property type="evidence" value="ECO:0007669"/>
    <property type="project" value="TreeGrafter"/>
</dbReference>
<dbReference type="GO" id="GO:0005525">
    <property type="term" value="F:GTP binding"/>
    <property type="evidence" value="ECO:0007669"/>
    <property type="project" value="UniProtKB-UniRule"/>
</dbReference>
<dbReference type="GO" id="GO:0003924">
    <property type="term" value="F:GTPase activity"/>
    <property type="evidence" value="ECO:0007669"/>
    <property type="project" value="InterPro"/>
</dbReference>
<dbReference type="GO" id="GO:0097216">
    <property type="term" value="F:guanosine tetraphosphate binding"/>
    <property type="evidence" value="ECO:0007669"/>
    <property type="project" value="UniProtKB-ARBA"/>
</dbReference>
<dbReference type="GO" id="GO:0003746">
    <property type="term" value="F:translation elongation factor activity"/>
    <property type="evidence" value="ECO:0007669"/>
    <property type="project" value="UniProtKB-UniRule"/>
</dbReference>
<dbReference type="CDD" id="cd01884">
    <property type="entry name" value="EF_Tu"/>
    <property type="match status" value="1"/>
</dbReference>
<dbReference type="CDD" id="cd03697">
    <property type="entry name" value="EFTU_II"/>
    <property type="match status" value="1"/>
</dbReference>
<dbReference type="CDD" id="cd03707">
    <property type="entry name" value="EFTU_III"/>
    <property type="match status" value="1"/>
</dbReference>
<dbReference type="FunFam" id="2.40.30.10:FF:000001">
    <property type="entry name" value="Elongation factor Tu"/>
    <property type="match status" value="1"/>
</dbReference>
<dbReference type="FunFam" id="3.40.50.300:FF:000003">
    <property type="entry name" value="Elongation factor Tu"/>
    <property type="match status" value="1"/>
</dbReference>
<dbReference type="Gene3D" id="3.40.50.300">
    <property type="entry name" value="P-loop containing nucleotide triphosphate hydrolases"/>
    <property type="match status" value="1"/>
</dbReference>
<dbReference type="Gene3D" id="2.40.30.10">
    <property type="entry name" value="Translation factors"/>
    <property type="match status" value="2"/>
</dbReference>
<dbReference type="HAMAP" id="MF_00118_B">
    <property type="entry name" value="EF_Tu_B"/>
    <property type="match status" value="1"/>
</dbReference>
<dbReference type="InterPro" id="IPR041709">
    <property type="entry name" value="EF-Tu_GTP-bd"/>
</dbReference>
<dbReference type="InterPro" id="IPR050055">
    <property type="entry name" value="EF-Tu_GTPase"/>
</dbReference>
<dbReference type="InterPro" id="IPR004161">
    <property type="entry name" value="EFTu-like_2"/>
</dbReference>
<dbReference type="InterPro" id="IPR033720">
    <property type="entry name" value="EFTU_2"/>
</dbReference>
<dbReference type="InterPro" id="IPR031157">
    <property type="entry name" value="G_TR_CS"/>
</dbReference>
<dbReference type="InterPro" id="IPR027417">
    <property type="entry name" value="P-loop_NTPase"/>
</dbReference>
<dbReference type="InterPro" id="IPR005225">
    <property type="entry name" value="Small_GTP-bd"/>
</dbReference>
<dbReference type="InterPro" id="IPR000795">
    <property type="entry name" value="T_Tr_GTP-bd_dom"/>
</dbReference>
<dbReference type="InterPro" id="IPR009000">
    <property type="entry name" value="Transl_B-barrel_sf"/>
</dbReference>
<dbReference type="InterPro" id="IPR009001">
    <property type="entry name" value="Transl_elong_EF1A/Init_IF2_C"/>
</dbReference>
<dbReference type="InterPro" id="IPR004541">
    <property type="entry name" value="Transl_elong_EFTu/EF1A_bac/org"/>
</dbReference>
<dbReference type="InterPro" id="IPR004160">
    <property type="entry name" value="Transl_elong_EFTu/EF1A_C"/>
</dbReference>
<dbReference type="NCBIfam" id="TIGR00485">
    <property type="entry name" value="EF-Tu"/>
    <property type="match status" value="1"/>
</dbReference>
<dbReference type="NCBIfam" id="NF000766">
    <property type="entry name" value="PRK00049.1"/>
    <property type="match status" value="1"/>
</dbReference>
<dbReference type="NCBIfam" id="NF009372">
    <property type="entry name" value="PRK12735.1"/>
    <property type="match status" value="1"/>
</dbReference>
<dbReference type="NCBIfam" id="NF009373">
    <property type="entry name" value="PRK12736.1"/>
    <property type="match status" value="1"/>
</dbReference>
<dbReference type="NCBIfam" id="TIGR00231">
    <property type="entry name" value="small_GTP"/>
    <property type="match status" value="1"/>
</dbReference>
<dbReference type="PANTHER" id="PTHR43721:SF22">
    <property type="entry name" value="ELONGATION FACTOR TU, MITOCHONDRIAL"/>
    <property type="match status" value="1"/>
</dbReference>
<dbReference type="PANTHER" id="PTHR43721">
    <property type="entry name" value="ELONGATION FACTOR TU-RELATED"/>
    <property type="match status" value="1"/>
</dbReference>
<dbReference type="Pfam" id="PF00009">
    <property type="entry name" value="GTP_EFTU"/>
    <property type="match status" value="1"/>
</dbReference>
<dbReference type="Pfam" id="PF03144">
    <property type="entry name" value="GTP_EFTU_D2"/>
    <property type="match status" value="1"/>
</dbReference>
<dbReference type="Pfam" id="PF03143">
    <property type="entry name" value="GTP_EFTU_D3"/>
    <property type="match status" value="1"/>
</dbReference>
<dbReference type="PRINTS" id="PR00315">
    <property type="entry name" value="ELONGATNFCT"/>
</dbReference>
<dbReference type="SUPFAM" id="SSF50465">
    <property type="entry name" value="EF-Tu/eEF-1alpha/eIF2-gamma C-terminal domain"/>
    <property type="match status" value="1"/>
</dbReference>
<dbReference type="SUPFAM" id="SSF52540">
    <property type="entry name" value="P-loop containing nucleoside triphosphate hydrolases"/>
    <property type="match status" value="1"/>
</dbReference>
<dbReference type="SUPFAM" id="SSF50447">
    <property type="entry name" value="Translation proteins"/>
    <property type="match status" value="1"/>
</dbReference>
<dbReference type="PROSITE" id="PS00301">
    <property type="entry name" value="G_TR_1"/>
    <property type="match status" value="1"/>
</dbReference>
<dbReference type="PROSITE" id="PS51722">
    <property type="entry name" value="G_TR_2"/>
    <property type="match status" value="1"/>
</dbReference>
<gene>
    <name evidence="2" type="primary">tuf1</name>
    <name type="ordered locus">RPE_3588</name>
</gene>
<gene>
    <name evidence="2" type="primary">tuf2</name>
    <name type="ordered locus">RPE_3612</name>
</gene>
<proteinExistence type="inferred from homology"/>
<evidence type="ECO:0000250" key="1"/>
<evidence type="ECO:0000255" key="2">
    <source>
        <dbReference type="HAMAP-Rule" id="MF_00118"/>
    </source>
</evidence>
<reference key="1">
    <citation type="submission" date="2006-09" db="EMBL/GenBank/DDBJ databases">
        <title>Complete sequence of Rhodopseudomonas palustris BisA53.</title>
        <authorList>
            <consortium name="US DOE Joint Genome Institute"/>
            <person name="Copeland A."/>
            <person name="Lucas S."/>
            <person name="Lapidus A."/>
            <person name="Barry K."/>
            <person name="Detter J.C."/>
            <person name="Glavina del Rio T."/>
            <person name="Hammon N."/>
            <person name="Israni S."/>
            <person name="Dalin E."/>
            <person name="Tice H."/>
            <person name="Pitluck S."/>
            <person name="Chain P."/>
            <person name="Malfatti S."/>
            <person name="Shin M."/>
            <person name="Vergez L."/>
            <person name="Schmutz J."/>
            <person name="Larimer F."/>
            <person name="Land M."/>
            <person name="Hauser L."/>
            <person name="Pelletier D.A."/>
            <person name="Kyrpides N."/>
            <person name="Kim E."/>
            <person name="Harwood C.S."/>
            <person name="Oda Y."/>
            <person name="Richardson P."/>
        </authorList>
    </citation>
    <scope>NUCLEOTIDE SEQUENCE [LARGE SCALE GENOMIC DNA]</scope>
    <source>
        <strain>BisA53</strain>
    </source>
</reference>
<accession>Q07KJ2</accession>
<protein>
    <recommendedName>
        <fullName evidence="2">Elongation factor Tu</fullName>
        <shortName evidence="2">EF-Tu</shortName>
        <ecNumber evidence="2">3.6.5.3</ecNumber>
    </recommendedName>
</protein>
<keyword id="KW-0963">Cytoplasm</keyword>
<keyword id="KW-0251">Elongation factor</keyword>
<keyword id="KW-0342">GTP-binding</keyword>
<keyword id="KW-0378">Hydrolase</keyword>
<keyword id="KW-0460">Magnesium</keyword>
<keyword id="KW-0479">Metal-binding</keyword>
<keyword id="KW-0547">Nucleotide-binding</keyword>
<keyword id="KW-0648">Protein biosynthesis</keyword>